<evidence type="ECO:0000255" key="1">
    <source>
        <dbReference type="HAMAP-Rule" id="MF_01141"/>
    </source>
</evidence>
<reference key="1">
    <citation type="submission" date="2008-10" db="EMBL/GenBank/DDBJ databases">
        <title>Genome sequence of Bacillus cereus AH820.</title>
        <authorList>
            <person name="Dodson R.J."/>
            <person name="Durkin A.S."/>
            <person name="Rosovitz M.J."/>
            <person name="Rasko D.A."/>
            <person name="Hoffmaster A."/>
            <person name="Ravel J."/>
            <person name="Sutton G."/>
        </authorList>
    </citation>
    <scope>NUCLEOTIDE SEQUENCE [LARGE SCALE GENOMIC DNA]</scope>
    <source>
        <strain>AH820</strain>
    </source>
</reference>
<feature type="chain" id="PRO_1000137343" description="Antiholin-like protein LrgA">
    <location>
        <begin position="1"/>
        <end position="143"/>
    </location>
</feature>
<feature type="transmembrane region" description="Helical" evidence="1">
    <location>
        <begin position="6"/>
        <end position="26"/>
    </location>
</feature>
<feature type="transmembrane region" description="Helical" evidence="1">
    <location>
        <begin position="30"/>
        <end position="50"/>
    </location>
</feature>
<feature type="transmembrane region" description="Helical" evidence="1">
    <location>
        <begin position="61"/>
        <end position="81"/>
    </location>
</feature>
<feature type="transmembrane region" description="Helical" evidence="1">
    <location>
        <begin position="97"/>
        <end position="117"/>
    </location>
</feature>
<sequence>MSTKKVYSFLSQAFIFSAIMLISNIIATHLPIPMPSSVIGLVILFSLLCLKVIKLEQVESLGTALTGIIGFLFVPSGISVINSFGVMGQYFVQILTVIVVATVILLAVTGLFAQFILGKDEKETEDTKELKVVNKGRKHGKVA</sequence>
<name>LRGA_BACC0</name>
<dbReference type="EMBL" id="CP001283">
    <property type="protein sequence ID" value="ACK92401.1"/>
    <property type="molecule type" value="Genomic_DNA"/>
</dbReference>
<dbReference type="RefSeq" id="WP_000104893.1">
    <property type="nucleotide sequence ID" value="NC_011773.1"/>
</dbReference>
<dbReference type="SMR" id="B7JIF6"/>
<dbReference type="KEGG" id="bcu:BCAH820_5535"/>
<dbReference type="HOGENOM" id="CLU_113736_0_1_9"/>
<dbReference type="Proteomes" id="UP000001363">
    <property type="component" value="Chromosome"/>
</dbReference>
<dbReference type="GO" id="GO:0005886">
    <property type="term" value="C:plasma membrane"/>
    <property type="evidence" value="ECO:0007669"/>
    <property type="project" value="UniProtKB-SubCell"/>
</dbReference>
<dbReference type="GO" id="GO:0019835">
    <property type="term" value="P:cytolysis"/>
    <property type="evidence" value="ECO:0007669"/>
    <property type="project" value="UniProtKB-UniRule"/>
</dbReference>
<dbReference type="GO" id="GO:0031640">
    <property type="term" value="P:killing of cells of another organism"/>
    <property type="evidence" value="ECO:0007669"/>
    <property type="project" value="UniProtKB-KW"/>
</dbReference>
<dbReference type="GO" id="GO:0012501">
    <property type="term" value="P:programmed cell death"/>
    <property type="evidence" value="ECO:0007669"/>
    <property type="project" value="UniProtKB-UniRule"/>
</dbReference>
<dbReference type="HAMAP" id="MF_01141">
    <property type="entry name" value="LrgA"/>
    <property type="match status" value="1"/>
</dbReference>
<dbReference type="InterPro" id="IPR023736">
    <property type="entry name" value="Antiholin-like_LrgA"/>
</dbReference>
<dbReference type="InterPro" id="IPR005538">
    <property type="entry name" value="LrgA/CidA"/>
</dbReference>
<dbReference type="NCBIfam" id="NF003155">
    <property type="entry name" value="PRK04125.1"/>
    <property type="match status" value="1"/>
</dbReference>
<dbReference type="PANTHER" id="PTHR33931:SF4">
    <property type="entry name" value="ANTIHOLIN-LIKE PROTEIN LRGA"/>
    <property type="match status" value="1"/>
</dbReference>
<dbReference type="PANTHER" id="PTHR33931">
    <property type="entry name" value="HOLIN-LIKE PROTEIN CIDA-RELATED"/>
    <property type="match status" value="1"/>
</dbReference>
<dbReference type="Pfam" id="PF03788">
    <property type="entry name" value="LrgA"/>
    <property type="match status" value="1"/>
</dbReference>
<gene>
    <name evidence="1" type="primary">lrgA</name>
    <name type="ordered locus">BCAH820_5535</name>
</gene>
<comment type="function">
    <text evidence="1">Inhibits the expression or activity of extracellular murein hydrolases by interacting, possibly with LrgB, with the holin-like protein CidA. The LrgAB and CidA proteins may affect the proton motive force of the membrane. May be involved in programmed cell death (PCD), possibly triggering PCD in response to antibiotics and environmental stresses.</text>
</comment>
<comment type="subcellular location">
    <subcellularLocation>
        <location evidence="1">Cell membrane</location>
        <topology evidence="1">Multi-pass membrane protein</topology>
    </subcellularLocation>
</comment>
<comment type="similarity">
    <text evidence="1">Belongs to the CidA/LrgA family. LrgA subfamily.</text>
</comment>
<protein>
    <recommendedName>
        <fullName evidence="1">Antiholin-like protein LrgA</fullName>
    </recommendedName>
</protein>
<keyword id="KW-1003">Cell membrane</keyword>
<keyword id="KW-0204">Cytolysis</keyword>
<keyword id="KW-0472">Membrane</keyword>
<keyword id="KW-0812">Transmembrane</keyword>
<keyword id="KW-1133">Transmembrane helix</keyword>
<accession>B7JIF6</accession>
<organism>
    <name type="scientific">Bacillus cereus (strain AH820)</name>
    <dbReference type="NCBI Taxonomy" id="405535"/>
    <lineage>
        <taxon>Bacteria</taxon>
        <taxon>Bacillati</taxon>
        <taxon>Bacillota</taxon>
        <taxon>Bacilli</taxon>
        <taxon>Bacillales</taxon>
        <taxon>Bacillaceae</taxon>
        <taxon>Bacillus</taxon>
        <taxon>Bacillus cereus group</taxon>
    </lineage>
</organism>
<proteinExistence type="inferred from homology"/>